<comment type="function">
    <text evidence="2">Major component of the virion core that undergoes proteolytic processing during the immature virion (IV) to mature virion (MV) transition. Essential for the formation of a structurally normal core.</text>
</comment>
<comment type="subcellular location">
    <subcellularLocation>
        <location evidence="2">Virion</location>
    </subcellularLocation>
    <text evidence="2">Localizes to the virion core wall, the mature protein accounts for 11% of the dry mass of the virion.</text>
</comment>
<comment type="PTM">
    <text evidence="2">The 73-kDa precursor is cleaved to a mature protein of 60 kDa during virion maturation. Proteolytic cleavage of major core proteins OPG129, OPG136, and OPG098, which occurs at a late stage of core formation, is required for production of infectious mature virions (MV).</text>
</comment>
<comment type="similarity">
    <text evidence="3">Belongs to the orthopoxvirus OPG129 family.</text>
</comment>
<feature type="propeptide" id="PRO_0000040581" evidence="1">
    <location>
        <begin position="1"/>
        <end position="61"/>
    </location>
</feature>
<feature type="chain" id="PRO_0000040582" description="Major core protein OPG129">
    <location>
        <begin position="62"/>
        <end position="644"/>
    </location>
</feature>
<evidence type="ECO:0000250" key="1"/>
<evidence type="ECO:0000250" key="2">
    <source>
        <dbReference type="UniProtKB" id="P06440"/>
    </source>
</evidence>
<evidence type="ECO:0000305" key="3"/>
<organismHost>
    <name type="scientific">Homo sapiens</name>
    <name type="common">Human</name>
    <dbReference type="NCBI Taxonomy" id="9606"/>
</organismHost>
<dbReference type="EMBL" id="M35027">
    <property type="protein sequence ID" value="AAA48118.1"/>
    <property type="molecule type" value="Genomic_DNA"/>
</dbReference>
<dbReference type="PIR" id="E42517">
    <property type="entry name" value="FOVZ5R"/>
</dbReference>
<dbReference type="Proteomes" id="UP000008269">
    <property type="component" value="Segment"/>
</dbReference>
<dbReference type="GO" id="GO:0044423">
    <property type="term" value="C:virion component"/>
    <property type="evidence" value="ECO:0007669"/>
    <property type="project" value="UniProtKB-KW"/>
</dbReference>
<dbReference type="InterPro" id="IPR004972">
    <property type="entry name" value="P4B"/>
</dbReference>
<dbReference type="Pfam" id="PF03292">
    <property type="entry name" value="Pox_P4B"/>
    <property type="match status" value="1"/>
</dbReference>
<protein>
    <recommendedName>
        <fullName>Major core protein OPG129</fullName>
    </recommendedName>
    <alternativeName>
        <fullName>Virion core protein 4b</fullName>
        <shortName>p4b</shortName>
    </alternativeName>
</protein>
<keyword id="KW-1185">Reference proteome</keyword>
<keyword id="KW-0946">Virion</keyword>
<accession>P20643</accession>
<proteinExistence type="inferred from homology"/>
<gene>
    <name type="primary">OPG129</name>
    <name type="ORF">A3L</name>
</gene>
<organism>
    <name type="scientific">Vaccinia virus (strain Copenhagen)</name>
    <name type="common">VACV</name>
    <dbReference type="NCBI Taxonomy" id="10249"/>
    <lineage>
        <taxon>Viruses</taxon>
        <taxon>Varidnaviria</taxon>
        <taxon>Bamfordvirae</taxon>
        <taxon>Nucleocytoviricota</taxon>
        <taxon>Pokkesviricetes</taxon>
        <taxon>Chitovirales</taxon>
        <taxon>Poxviridae</taxon>
        <taxon>Chordopoxvirinae</taxon>
        <taxon>Orthopoxvirus</taxon>
        <taxon>Vaccinia virus</taxon>
    </lineage>
</organism>
<reference key="1">
    <citation type="journal article" date="1990" name="Virology">
        <title>The complete DNA sequence of vaccinia virus.</title>
        <authorList>
            <person name="Goebel S.J."/>
            <person name="Johnson G.P."/>
            <person name="Perkus M.E."/>
            <person name="Davis S.W."/>
            <person name="Winslow J.P."/>
            <person name="Paoletti E."/>
        </authorList>
    </citation>
    <scope>NUCLEOTIDE SEQUENCE [LARGE SCALE GENOMIC DNA]</scope>
</reference>
<reference key="2">
    <citation type="journal article" date="1990" name="Virology">
        <title>Appendix to 'The complete DNA sequence of vaccinia virus'.</title>
        <authorList>
            <person name="Goebel S.J."/>
            <person name="Johnson G.P."/>
            <person name="Perkus M.E."/>
            <person name="Davis S.W."/>
            <person name="Winslow J.P."/>
            <person name="Paoletti E."/>
        </authorList>
    </citation>
    <scope>NUCLEOTIDE SEQUENCE [LARGE SCALE GENOMIC DNA]</scope>
</reference>
<name>PG129_VACCC</name>
<sequence>MEAVVNSDVFLTSNAGLKSSYTNQTLSLVDEDHIHTSDKSLSCSVCNSLSQIVDDDFISAGARNQRTKPKRAGNNQSQQPIKKDCMVSIDEVASTHDWSTRLRNDGNAIAKYLTTNKYDTSNFTIQDMLNIMNKLNIVRTNRNELFQLLTHVKSTLNNASVSVKCTHPLVLIHSRASPRIGDQLKELDKIYSPSNHHILLSTTRFQSMHFTDMSSSQDLSFIYRKPETNYYIHPILMALFGIKLPALENAYVHGDTYSLIQQLYEFRKVKSYNYMLLVNRLTEDNPIVITGVSDLISTEIQRANMHTMIRKAIMNIRMGIFYCNDDDAVDPHLMKIIHTGCSQVMTDEEQILASILSIVGFRPTLVSVARPINGISYDMKLQAAPYIVVNPMKMITTSDSPISINSKDIYSMAFDGNSGRVVFAPPNIGYGRCSGVTHIDPLGTNVMGSAVHSPVIVNGAMMFYVERRQNKNMFGGECYTGFRSLIDDTPIDVSPEIMLNGIMYRLKSAVCYKLGDQFFDCGSSDIFLKGHYTILFTENGPWMYDPLSVFNPGARNARLMRALKNQYKKLSMDSDDGFYEWLNGDGSVFAASKQQMLMNHVANFDDDLLTMEEAMSMISRHCCILIYAQDYDQYISARHITELF</sequence>